<evidence type="ECO:0000250" key="1"/>
<evidence type="ECO:0000255" key="2"/>
<evidence type="ECO:0000305" key="3"/>
<keyword id="KW-0249">Electron transport</keyword>
<keyword id="KW-0472">Membrane</keyword>
<keyword id="KW-0496">Mitochondrion</keyword>
<keyword id="KW-0999">Mitochondrion inner membrane</keyword>
<keyword id="KW-0520">NAD</keyword>
<keyword id="KW-0679">Respiratory chain</keyword>
<keyword id="KW-1278">Translocase</keyword>
<keyword id="KW-0812">Transmembrane</keyword>
<keyword id="KW-1133">Transmembrane helix</keyword>
<keyword id="KW-0813">Transport</keyword>
<keyword id="KW-0830">Ubiquinone</keyword>
<dbReference type="EC" id="7.1.1.2"/>
<dbReference type="EMBL" id="M57912">
    <property type="protein sequence ID" value="AAA99050.1"/>
    <property type="molecule type" value="Genomic_DNA"/>
</dbReference>
<dbReference type="SMR" id="P29867"/>
<dbReference type="Proteomes" id="UP000515162">
    <property type="component" value="Mitochondrion MT"/>
</dbReference>
<dbReference type="GO" id="GO:0005743">
    <property type="term" value="C:mitochondrial inner membrane"/>
    <property type="evidence" value="ECO:0007669"/>
    <property type="project" value="UniProtKB-SubCell"/>
</dbReference>
<dbReference type="GO" id="GO:0008137">
    <property type="term" value="F:NADH dehydrogenase (ubiquinone) activity"/>
    <property type="evidence" value="ECO:0007669"/>
    <property type="project" value="UniProtKB-EC"/>
</dbReference>
<dbReference type="GO" id="GO:0006120">
    <property type="term" value="P:mitochondrial electron transport, NADH to ubiquinone"/>
    <property type="evidence" value="ECO:0007669"/>
    <property type="project" value="InterPro"/>
</dbReference>
<dbReference type="InterPro" id="IPR050175">
    <property type="entry name" value="Complex_I_Subunit_2"/>
</dbReference>
<dbReference type="InterPro" id="IPR010933">
    <property type="entry name" value="NADH_DH_su2_C"/>
</dbReference>
<dbReference type="InterPro" id="IPR003917">
    <property type="entry name" value="NADH_UbQ_OxRdtase_chain2"/>
</dbReference>
<dbReference type="InterPro" id="IPR001750">
    <property type="entry name" value="ND/Mrp_TM"/>
</dbReference>
<dbReference type="PANTHER" id="PTHR46552">
    <property type="entry name" value="NADH-UBIQUINONE OXIDOREDUCTASE CHAIN 2"/>
    <property type="match status" value="1"/>
</dbReference>
<dbReference type="PANTHER" id="PTHR46552:SF1">
    <property type="entry name" value="NADH-UBIQUINONE OXIDOREDUCTASE CHAIN 2"/>
    <property type="match status" value="1"/>
</dbReference>
<dbReference type="Pfam" id="PF06444">
    <property type="entry name" value="NADH_dehy_S2_C"/>
    <property type="match status" value="1"/>
</dbReference>
<dbReference type="Pfam" id="PF00361">
    <property type="entry name" value="Proton_antipo_M"/>
    <property type="match status" value="1"/>
</dbReference>
<dbReference type="PRINTS" id="PR01436">
    <property type="entry name" value="NADHDHGNASE2"/>
</dbReference>
<feature type="chain" id="PRO_0000117580" description="NADH-ubiquinone oxidoreductase chain 2">
    <location>
        <begin position="1" status="less than"/>
        <end position="274"/>
    </location>
</feature>
<feature type="transmembrane region" description="Helical" evidence="2">
    <location>
        <begin position="28"/>
        <end position="48"/>
    </location>
</feature>
<feature type="transmembrane region" description="Helical" evidence="2">
    <location>
        <begin position="54"/>
        <end position="74"/>
    </location>
</feature>
<feature type="transmembrane region" description="Helical" evidence="2">
    <location>
        <begin position="79"/>
        <end position="99"/>
    </location>
</feature>
<feature type="transmembrane region" description="Helical" evidence="2">
    <location>
        <begin position="107"/>
        <end position="127"/>
    </location>
</feature>
<feature type="transmembrane region" description="Helical" evidence="2">
    <location>
        <begin position="128"/>
        <end position="148"/>
    </location>
</feature>
<feature type="transmembrane region" description="Helical" evidence="2">
    <location>
        <begin position="171"/>
        <end position="191"/>
    </location>
</feature>
<feature type="transmembrane region" description="Helical" evidence="2">
    <location>
        <begin position="206"/>
        <end position="226"/>
    </location>
</feature>
<feature type="transmembrane region" description="Helical" evidence="2">
    <location>
        <begin position="254"/>
        <end position="274"/>
    </location>
</feature>
<feature type="non-terminal residue">
    <location>
        <position position="1"/>
    </location>
</feature>
<sequence>STVLLFSSILLMLKNNLNNEINESFTSMIIMSALLLKSGAAPFHFWFPNMMEGLTWMNALVLMTWQKIAPLMLISYLNIKYLLLISVILSVIIGAIGGLNQTSLRKLMAFSSINHLGWMLSSLMISESIWLIYFFFYSFLSFVLTFMFNIFKLFHLNQLFSWFVNSKILKFTLFMNFLSLGGLPPFLGFLPKWLVIQQLTLCNQYFLLLLMMMSTLITLFFYLRICYSAFMMNYFENNWIMKMNMISSNTNMYLIMTFFSIFGLFMISLFYFMF</sequence>
<name>NU2M_DROMA</name>
<protein>
    <recommendedName>
        <fullName>NADH-ubiquinone oxidoreductase chain 2</fullName>
        <ecNumber>7.1.1.2</ecNumber>
    </recommendedName>
    <alternativeName>
        <fullName>NADH dehydrogenase subunit 2</fullName>
    </alternativeName>
</protein>
<comment type="function">
    <text evidence="1">Core subunit of the mitochondrial membrane respiratory chain NADH dehydrogenase (Complex I) that is believed to belong to the minimal assembly required for catalysis. Complex I functions in the transfer of electrons from NADH to the respiratory chain. The immediate electron acceptor for the enzyme is believed to be ubiquinone (By similarity).</text>
</comment>
<comment type="catalytic activity">
    <reaction>
        <text>a ubiquinone + NADH + 5 H(+)(in) = a ubiquinol + NAD(+) + 4 H(+)(out)</text>
        <dbReference type="Rhea" id="RHEA:29091"/>
        <dbReference type="Rhea" id="RHEA-COMP:9565"/>
        <dbReference type="Rhea" id="RHEA-COMP:9566"/>
        <dbReference type="ChEBI" id="CHEBI:15378"/>
        <dbReference type="ChEBI" id="CHEBI:16389"/>
        <dbReference type="ChEBI" id="CHEBI:17976"/>
        <dbReference type="ChEBI" id="CHEBI:57540"/>
        <dbReference type="ChEBI" id="CHEBI:57945"/>
        <dbReference type="EC" id="7.1.1.2"/>
    </reaction>
</comment>
<comment type="subcellular location">
    <subcellularLocation>
        <location>Mitochondrion inner membrane</location>
        <topology>Multi-pass membrane protein</topology>
    </subcellularLocation>
</comment>
<comment type="similarity">
    <text evidence="3">Belongs to the complex I subunit 2 family.</text>
</comment>
<gene>
    <name type="primary">mt:ND2</name>
    <name type="synonym">ND2</name>
</gene>
<accession>P29867</accession>
<reference key="1">
    <citation type="journal article" date="1990" name="Proc. Natl. Acad. Sci. U.S.A.">
        <title>Evolution of Drosophila mitochondrial DNA and the history of the melanogaster subgroup.</title>
        <authorList>
            <person name="Satta Y."/>
            <person name="Takahata N."/>
        </authorList>
    </citation>
    <scope>NUCLEOTIDE SEQUENCE [GENOMIC DNA]</scope>
</reference>
<proteinExistence type="inferred from homology"/>
<organism>
    <name type="scientific">Drosophila mauritiana</name>
    <name type="common">Fruit fly</name>
    <dbReference type="NCBI Taxonomy" id="7226"/>
    <lineage>
        <taxon>Eukaryota</taxon>
        <taxon>Metazoa</taxon>
        <taxon>Ecdysozoa</taxon>
        <taxon>Arthropoda</taxon>
        <taxon>Hexapoda</taxon>
        <taxon>Insecta</taxon>
        <taxon>Pterygota</taxon>
        <taxon>Neoptera</taxon>
        <taxon>Endopterygota</taxon>
        <taxon>Diptera</taxon>
        <taxon>Brachycera</taxon>
        <taxon>Muscomorpha</taxon>
        <taxon>Ephydroidea</taxon>
        <taxon>Drosophilidae</taxon>
        <taxon>Drosophila</taxon>
        <taxon>Sophophora</taxon>
    </lineage>
</organism>
<geneLocation type="mitochondrion"/>